<sequence length="166" mass="18237">MAAIPPDTWQPPNVYLETSMGVIVLELYWKHAPKTCKNFAELARRGYYNGTKFHRIIKDFMIQGGDPTGTGRGGASIYGKQFEDELHPDLKFTGAGILAMANAGPDTNGSQFFVTLAPTQWLDGKHTIFGRVCQGIGMVNRVGMVETNSQDRPVDDVKILKAYPSG</sequence>
<protein>
    <recommendedName>
        <fullName>Peptidyl-prolyl cis-trans isomerase-like 1</fullName>
        <shortName>PPIase</shortName>
        <ecNumber evidence="2">5.2.1.8</ecNumber>
    </recommendedName>
    <alternativeName>
        <fullName>Rotamase PPIL1</fullName>
    </alternativeName>
</protein>
<gene>
    <name type="primary">Ppil1</name>
</gene>
<dbReference type="EC" id="5.2.1.8" evidence="2"/>
<dbReference type="EMBL" id="AK004331">
    <property type="protein sequence ID" value="BAB23265.1"/>
    <property type="molecule type" value="mRNA"/>
</dbReference>
<dbReference type="EMBL" id="AK150643">
    <property type="protein sequence ID" value="BAE29731.1"/>
    <property type="molecule type" value="mRNA"/>
</dbReference>
<dbReference type="EMBL" id="AK151572">
    <property type="protein sequence ID" value="BAE30513.1"/>
    <property type="molecule type" value="mRNA"/>
</dbReference>
<dbReference type="EMBL" id="BC058369">
    <property type="protein sequence ID" value="AAH58369.1"/>
    <property type="molecule type" value="mRNA"/>
</dbReference>
<dbReference type="CCDS" id="CCDS28593.1"/>
<dbReference type="RefSeq" id="NP_081121.1">
    <property type="nucleotide sequence ID" value="NM_026845.4"/>
</dbReference>
<dbReference type="BMRB" id="Q9D0W5"/>
<dbReference type="SMR" id="Q9D0W5"/>
<dbReference type="BioGRID" id="213066">
    <property type="interactions" value="20"/>
</dbReference>
<dbReference type="FunCoup" id="Q9D0W5">
    <property type="interactions" value="2489"/>
</dbReference>
<dbReference type="STRING" id="10090.ENSMUSP00000024802"/>
<dbReference type="iPTMnet" id="Q9D0W5"/>
<dbReference type="PhosphoSitePlus" id="Q9D0W5"/>
<dbReference type="jPOST" id="Q9D0W5"/>
<dbReference type="PaxDb" id="10090-ENSMUSP00000024802"/>
<dbReference type="ProteomicsDB" id="291806"/>
<dbReference type="Pumba" id="Q9D0W5"/>
<dbReference type="Antibodypedia" id="29729">
    <property type="antibodies" value="282 antibodies from 29 providers"/>
</dbReference>
<dbReference type="DNASU" id="68816"/>
<dbReference type="Ensembl" id="ENSMUST00000024802.10">
    <property type="protein sequence ID" value="ENSMUSP00000024802.9"/>
    <property type="gene ID" value="ENSMUSG00000024007.16"/>
</dbReference>
<dbReference type="GeneID" id="68816"/>
<dbReference type="KEGG" id="mmu:68816"/>
<dbReference type="UCSC" id="uc008bsm.1">
    <property type="organism name" value="mouse"/>
</dbReference>
<dbReference type="AGR" id="MGI:1916066"/>
<dbReference type="CTD" id="51645"/>
<dbReference type="MGI" id="MGI:1916066">
    <property type="gene designation" value="Ppil1"/>
</dbReference>
<dbReference type="VEuPathDB" id="HostDB:ENSMUSG00000024007"/>
<dbReference type="eggNOG" id="KOG0881">
    <property type="taxonomic scope" value="Eukaryota"/>
</dbReference>
<dbReference type="GeneTree" id="ENSGT00940000153189"/>
<dbReference type="HOGENOM" id="CLU_012062_16_3_1"/>
<dbReference type="InParanoid" id="Q9D0W5"/>
<dbReference type="OMA" id="ELYNDHA"/>
<dbReference type="OrthoDB" id="5916692at2759"/>
<dbReference type="PhylomeDB" id="Q9D0W5"/>
<dbReference type="TreeFam" id="TF300200"/>
<dbReference type="Reactome" id="R-MMU-72163">
    <property type="pathway name" value="mRNA Splicing - Major Pathway"/>
</dbReference>
<dbReference type="BioGRID-ORCS" id="68816">
    <property type="hits" value="27 hits in 82 CRISPR screens"/>
</dbReference>
<dbReference type="ChiTaRS" id="Ppil1">
    <property type="organism name" value="mouse"/>
</dbReference>
<dbReference type="PRO" id="PR:Q9D0W5"/>
<dbReference type="Proteomes" id="UP000000589">
    <property type="component" value="Chromosome 17"/>
</dbReference>
<dbReference type="RNAct" id="Q9D0W5">
    <property type="molecule type" value="protein"/>
</dbReference>
<dbReference type="Bgee" id="ENSMUSG00000024007">
    <property type="expression patterns" value="Expressed in dorsal pancreas and 245 other cell types or tissues"/>
</dbReference>
<dbReference type="ExpressionAtlas" id="Q9D0W5">
    <property type="expression patterns" value="baseline and differential"/>
</dbReference>
<dbReference type="GO" id="GO:0005634">
    <property type="term" value="C:nucleus"/>
    <property type="evidence" value="ECO:0000250"/>
    <property type="project" value="UniProtKB"/>
</dbReference>
<dbReference type="GO" id="GO:0071007">
    <property type="term" value="C:U2-type catalytic step 2 spliceosome"/>
    <property type="evidence" value="ECO:0000250"/>
    <property type="project" value="UniProtKB"/>
</dbReference>
<dbReference type="GO" id="GO:0097718">
    <property type="term" value="F:disordered domain specific binding"/>
    <property type="evidence" value="ECO:0007669"/>
    <property type="project" value="Ensembl"/>
</dbReference>
<dbReference type="GO" id="GO:0003755">
    <property type="term" value="F:peptidyl-prolyl cis-trans isomerase activity"/>
    <property type="evidence" value="ECO:0000250"/>
    <property type="project" value="UniProtKB"/>
</dbReference>
<dbReference type="GO" id="GO:1990403">
    <property type="term" value="P:embryonic brain development"/>
    <property type="evidence" value="ECO:0000250"/>
    <property type="project" value="UniProtKB"/>
</dbReference>
<dbReference type="GO" id="GO:0000398">
    <property type="term" value="P:mRNA splicing, via spliceosome"/>
    <property type="evidence" value="ECO:0000250"/>
    <property type="project" value="UniProtKB"/>
</dbReference>
<dbReference type="GO" id="GO:0006457">
    <property type="term" value="P:protein folding"/>
    <property type="evidence" value="ECO:0007669"/>
    <property type="project" value="InterPro"/>
</dbReference>
<dbReference type="GO" id="GO:0000413">
    <property type="term" value="P:protein peptidyl-prolyl isomerization"/>
    <property type="evidence" value="ECO:0000250"/>
    <property type="project" value="UniProtKB"/>
</dbReference>
<dbReference type="CDD" id="cd01922">
    <property type="entry name" value="cyclophilin_SpCYP2_like"/>
    <property type="match status" value="1"/>
</dbReference>
<dbReference type="FunFam" id="2.40.100.10:FF:000008">
    <property type="entry name" value="Peptidyl-prolyl cis-trans isomerase"/>
    <property type="match status" value="1"/>
</dbReference>
<dbReference type="Gene3D" id="2.40.100.10">
    <property type="entry name" value="Cyclophilin-like"/>
    <property type="match status" value="1"/>
</dbReference>
<dbReference type="InterPro" id="IPR029000">
    <property type="entry name" value="Cyclophilin-like_dom_sf"/>
</dbReference>
<dbReference type="InterPro" id="IPR024936">
    <property type="entry name" value="Cyclophilin-type_PPIase"/>
</dbReference>
<dbReference type="InterPro" id="IPR020892">
    <property type="entry name" value="Cyclophilin-type_PPIase_CS"/>
</dbReference>
<dbReference type="InterPro" id="IPR002130">
    <property type="entry name" value="Cyclophilin-type_PPIase_dom"/>
</dbReference>
<dbReference type="InterPro" id="IPR044666">
    <property type="entry name" value="Cyclophilin_A-like"/>
</dbReference>
<dbReference type="PANTHER" id="PTHR45625">
    <property type="entry name" value="PEPTIDYL-PROLYL CIS-TRANS ISOMERASE-RELATED"/>
    <property type="match status" value="1"/>
</dbReference>
<dbReference type="PANTHER" id="PTHR45625:SF4">
    <property type="entry name" value="PEPTIDYLPROLYL ISOMERASE DOMAIN AND WD REPEAT-CONTAINING PROTEIN 1"/>
    <property type="match status" value="1"/>
</dbReference>
<dbReference type="Pfam" id="PF00160">
    <property type="entry name" value="Pro_isomerase"/>
    <property type="match status" value="1"/>
</dbReference>
<dbReference type="PIRSF" id="PIRSF001467">
    <property type="entry name" value="Peptidylpro_ismrse"/>
    <property type="match status" value="1"/>
</dbReference>
<dbReference type="PRINTS" id="PR00153">
    <property type="entry name" value="CSAPPISMRASE"/>
</dbReference>
<dbReference type="SUPFAM" id="SSF50891">
    <property type="entry name" value="Cyclophilin-like"/>
    <property type="match status" value="1"/>
</dbReference>
<dbReference type="PROSITE" id="PS00170">
    <property type="entry name" value="CSA_PPIASE_1"/>
    <property type="match status" value="1"/>
</dbReference>
<dbReference type="PROSITE" id="PS50072">
    <property type="entry name" value="CSA_PPIASE_2"/>
    <property type="match status" value="1"/>
</dbReference>
<proteinExistence type="evidence at protein level"/>
<evidence type="ECO:0000250" key="1"/>
<evidence type="ECO:0000250" key="2">
    <source>
        <dbReference type="UniProtKB" id="Q9Y3C6"/>
    </source>
</evidence>
<evidence type="ECO:0000255" key="3">
    <source>
        <dbReference type="PROSITE-ProRule" id="PRU00156"/>
    </source>
</evidence>
<evidence type="ECO:0000269" key="4">
    <source>
    </source>
</evidence>
<evidence type="ECO:0000305" key="5"/>
<accession>Q9D0W5</accession>
<accession>Q3UA03</accession>
<reference key="1">
    <citation type="journal article" date="2005" name="Science">
        <title>The transcriptional landscape of the mammalian genome.</title>
        <authorList>
            <person name="Carninci P."/>
            <person name="Kasukawa T."/>
            <person name="Katayama S."/>
            <person name="Gough J."/>
            <person name="Frith M.C."/>
            <person name="Maeda N."/>
            <person name="Oyama R."/>
            <person name="Ravasi T."/>
            <person name="Lenhard B."/>
            <person name="Wells C."/>
            <person name="Kodzius R."/>
            <person name="Shimokawa K."/>
            <person name="Bajic V.B."/>
            <person name="Brenner S.E."/>
            <person name="Batalov S."/>
            <person name="Forrest A.R."/>
            <person name="Zavolan M."/>
            <person name="Davis M.J."/>
            <person name="Wilming L.G."/>
            <person name="Aidinis V."/>
            <person name="Allen J.E."/>
            <person name="Ambesi-Impiombato A."/>
            <person name="Apweiler R."/>
            <person name="Aturaliya R.N."/>
            <person name="Bailey T.L."/>
            <person name="Bansal M."/>
            <person name="Baxter L."/>
            <person name="Beisel K.W."/>
            <person name="Bersano T."/>
            <person name="Bono H."/>
            <person name="Chalk A.M."/>
            <person name="Chiu K.P."/>
            <person name="Choudhary V."/>
            <person name="Christoffels A."/>
            <person name="Clutterbuck D.R."/>
            <person name="Crowe M.L."/>
            <person name="Dalla E."/>
            <person name="Dalrymple B.P."/>
            <person name="de Bono B."/>
            <person name="Della Gatta G."/>
            <person name="di Bernardo D."/>
            <person name="Down T."/>
            <person name="Engstrom P."/>
            <person name="Fagiolini M."/>
            <person name="Faulkner G."/>
            <person name="Fletcher C.F."/>
            <person name="Fukushima T."/>
            <person name="Furuno M."/>
            <person name="Futaki S."/>
            <person name="Gariboldi M."/>
            <person name="Georgii-Hemming P."/>
            <person name="Gingeras T.R."/>
            <person name="Gojobori T."/>
            <person name="Green R.E."/>
            <person name="Gustincich S."/>
            <person name="Harbers M."/>
            <person name="Hayashi Y."/>
            <person name="Hensch T.K."/>
            <person name="Hirokawa N."/>
            <person name="Hill D."/>
            <person name="Huminiecki L."/>
            <person name="Iacono M."/>
            <person name="Ikeo K."/>
            <person name="Iwama A."/>
            <person name="Ishikawa T."/>
            <person name="Jakt M."/>
            <person name="Kanapin A."/>
            <person name="Katoh M."/>
            <person name="Kawasawa Y."/>
            <person name="Kelso J."/>
            <person name="Kitamura H."/>
            <person name="Kitano H."/>
            <person name="Kollias G."/>
            <person name="Krishnan S.P."/>
            <person name="Kruger A."/>
            <person name="Kummerfeld S.K."/>
            <person name="Kurochkin I.V."/>
            <person name="Lareau L.F."/>
            <person name="Lazarevic D."/>
            <person name="Lipovich L."/>
            <person name="Liu J."/>
            <person name="Liuni S."/>
            <person name="McWilliam S."/>
            <person name="Madan Babu M."/>
            <person name="Madera M."/>
            <person name="Marchionni L."/>
            <person name="Matsuda H."/>
            <person name="Matsuzawa S."/>
            <person name="Miki H."/>
            <person name="Mignone F."/>
            <person name="Miyake S."/>
            <person name="Morris K."/>
            <person name="Mottagui-Tabar S."/>
            <person name="Mulder N."/>
            <person name="Nakano N."/>
            <person name="Nakauchi H."/>
            <person name="Ng P."/>
            <person name="Nilsson R."/>
            <person name="Nishiguchi S."/>
            <person name="Nishikawa S."/>
            <person name="Nori F."/>
            <person name="Ohara O."/>
            <person name="Okazaki Y."/>
            <person name="Orlando V."/>
            <person name="Pang K.C."/>
            <person name="Pavan W.J."/>
            <person name="Pavesi G."/>
            <person name="Pesole G."/>
            <person name="Petrovsky N."/>
            <person name="Piazza S."/>
            <person name="Reed J."/>
            <person name="Reid J.F."/>
            <person name="Ring B.Z."/>
            <person name="Ringwald M."/>
            <person name="Rost B."/>
            <person name="Ruan Y."/>
            <person name="Salzberg S.L."/>
            <person name="Sandelin A."/>
            <person name="Schneider C."/>
            <person name="Schoenbach C."/>
            <person name="Sekiguchi K."/>
            <person name="Semple C.A."/>
            <person name="Seno S."/>
            <person name="Sessa L."/>
            <person name="Sheng Y."/>
            <person name="Shibata Y."/>
            <person name="Shimada H."/>
            <person name="Shimada K."/>
            <person name="Silva D."/>
            <person name="Sinclair B."/>
            <person name="Sperling S."/>
            <person name="Stupka E."/>
            <person name="Sugiura K."/>
            <person name="Sultana R."/>
            <person name="Takenaka Y."/>
            <person name="Taki K."/>
            <person name="Tammoja K."/>
            <person name="Tan S.L."/>
            <person name="Tang S."/>
            <person name="Taylor M.S."/>
            <person name="Tegner J."/>
            <person name="Teichmann S.A."/>
            <person name="Ueda H.R."/>
            <person name="van Nimwegen E."/>
            <person name="Verardo R."/>
            <person name="Wei C.L."/>
            <person name="Yagi K."/>
            <person name="Yamanishi H."/>
            <person name="Zabarovsky E."/>
            <person name="Zhu S."/>
            <person name="Zimmer A."/>
            <person name="Hide W."/>
            <person name="Bult C."/>
            <person name="Grimmond S.M."/>
            <person name="Teasdale R.D."/>
            <person name="Liu E.T."/>
            <person name="Brusic V."/>
            <person name="Quackenbush J."/>
            <person name="Wahlestedt C."/>
            <person name="Mattick J.S."/>
            <person name="Hume D.A."/>
            <person name="Kai C."/>
            <person name="Sasaki D."/>
            <person name="Tomaru Y."/>
            <person name="Fukuda S."/>
            <person name="Kanamori-Katayama M."/>
            <person name="Suzuki M."/>
            <person name="Aoki J."/>
            <person name="Arakawa T."/>
            <person name="Iida J."/>
            <person name="Imamura K."/>
            <person name="Itoh M."/>
            <person name="Kato T."/>
            <person name="Kawaji H."/>
            <person name="Kawagashira N."/>
            <person name="Kawashima T."/>
            <person name="Kojima M."/>
            <person name="Kondo S."/>
            <person name="Konno H."/>
            <person name="Nakano K."/>
            <person name="Ninomiya N."/>
            <person name="Nishio T."/>
            <person name="Okada M."/>
            <person name="Plessy C."/>
            <person name="Shibata K."/>
            <person name="Shiraki T."/>
            <person name="Suzuki S."/>
            <person name="Tagami M."/>
            <person name="Waki K."/>
            <person name="Watahiki A."/>
            <person name="Okamura-Oho Y."/>
            <person name="Suzuki H."/>
            <person name="Kawai J."/>
            <person name="Hayashizaki Y."/>
        </authorList>
    </citation>
    <scope>NUCLEOTIDE SEQUENCE [LARGE SCALE MRNA]</scope>
    <source>
        <strain>C57BL/6J</strain>
        <tissue>Bone marrow</tissue>
        <tissue>Embryo</tissue>
    </source>
</reference>
<reference key="2">
    <citation type="journal article" date="2004" name="Genome Res.">
        <title>The status, quality, and expansion of the NIH full-length cDNA project: the Mammalian Gene Collection (MGC).</title>
        <authorList>
            <consortium name="The MGC Project Team"/>
        </authorList>
    </citation>
    <scope>NUCLEOTIDE SEQUENCE [LARGE SCALE MRNA]</scope>
    <source>
        <strain>C57BL/6J</strain>
        <tissue>Brain</tissue>
    </source>
</reference>
<reference key="3">
    <citation type="journal article" date="2010" name="Cell">
        <title>A tissue-specific atlas of mouse protein phosphorylation and expression.</title>
        <authorList>
            <person name="Huttlin E.L."/>
            <person name="Jedrychowski M.P."/>
            <person name="Elias J.E."/>
            <person name="Goswami T."/>
            <person name="Rad R."/>
            <person name="Beausoleil S.A."/>
            <person name="Villen J."/>
            <person name="Haas W."/>
            <person name="Sowa M.E."/>
            <person name="Gygi S.P."/>
        </authorList>
    </citation>
    <scope>IDENTIFICATION BY MASS SPECTROMETRY [LARGE SCALE ANALYSIS]</scope>
    <source>
        <tissue>Brain</tissue>
        <tissue>Heart</tissue>
        <tissue>Kidney</tissue>
        <tissue>Liver</tissue>
        <tissue>Lung</tissue>
        <tissue>Spleen</tissue>
        <tissue>Testis</tissue>
    </source>
</reference>
<reference key="4">
    <citation type="journal article" date="2021" name="Neuron">
        <title>Mutations in Spliceosomal Genes PPIL1 and PRP17 Cause Neurodegenerative Pontocerebellar Hypoplasia with Microcephaly.</title>
        <authorList>
            <person name="Chai G."/>
            <person name="Webb A."/>
            <person name="Li C."/>
            <person name="Antaki D."/>
            <person name="Lee S."/>
            <person name="Breuss M.W."/>
            <person name="Lang N."/>
            <person name="Stanley V."/>
            <person name="Anzenberg P."/>
            <person name="Yang X."/>
            <person name="Marshall T."/>
            <person name="Gaffney P."/>
            <person name="Wierenga K.J."/>
            <person name="Chung B.H."/>
            <person name="Tsang M.H."/>
            <person name="Pais L.S."/>
            <person name="Lovgren A.K."/>
            <person name="VanNoy G.E."/>
            <person name="Rehm H.L."/>
            <person name="Mirzaa G."/>
            <person name="Leon E."/>
            <person name="Diaz J."/>
            <person name="Neumann A."/>
            <person name="Kalverda A.P."/>
            <person name="Manfield I.W."/>
            <person name="Parry D.A."/>
            <person name="Logan C.V."/>
            <person name="Johnson C.A."/>
            <person name="Bonthron D.T."/>
            <person name="Valleley E.M.A."/>
            <person name="Issa M.Y."/>
            <person name="Abdel-Ghafar S.F."/>
            <person name="Abdel-Hamid M.S."/>
            <person name="Jennings P."/>
            <person name="Zaki M.S."/>
            <person name="Sheridan E."/>
            <person name="Gleeson J.G."/>
        </authorList>
    </citation>
    <scope>FUNCTION</scope>
    <scope>DEVELOPMENTAL STAGE</scope>
    <scope>DISRUPTION PHENOTYPE</scope>
    <scope>MUTAGENESIS OF ARG-55</scope>
</reference>
<keyword id="KW-0413">Isomerase</keyword>
<keyword id="KW-0507">mRNA processing</keyword>
<keyword id="KW-0508">mRNA splicing</keyword>
<keyword id="KW-0539">Nucleus</keyword>
<keyword id="KW-0597">Phosphoprotein</keyword>
<keyword id="KW-1185">Reference proteome</keyword>
<keyword id="KW-0697">Rotamase</keyword>
<keyword id="KW-0747">Spliceosome</keyword>
<name>PPIL1_MOUSE</name>
<comment type="function">
    <text evidence="2 4">Involved in pre-mRNA splicing as component of the spliceosome (PubMed:33220177). PPIases accelerate the folding of proteins. It catalyzes the cis-trans isomerization of proline imidic peptide bonds in oligopeptides (By similarity). Catalyzes prolyl peptide bond isomerization in CDC40/PRP17 (By similarity). Plays an important role in embryonic brain development; this function is independent of its isomerase activity (PubMed:33220177).</text>
</comment>
<comment type="catalytic activity">
    <reaction evidence="2">
        <text>[protein]-peptidylproline (omega=180) = [protein]-peptidylproline (omega=0)</text>
        <dbReference type="Rhea" id="RHEA:16237"/>
        <dbReference type="Rhea" id="RHEA-COMP:10747"/>
        <dbReference type="Rhea" id="RHEA-COMP:10748"/>
        <dbReference type="ChEBI" id="CHEBI:83833"/>
        <dbReference type="ChEBI" id="CHEBI:83834"/>
        <dbReference type="EC" id="5.2.1.8"/>
    </reaction>
</comment>
<comment type="activity regulation">
    <text evidence="2">Inhibited by Cyclosporin A.</text>
</comment>
<comment type="subunit">
    <text evidence="2">Identified in the spliceosome C complex. Interacts with SNW1/SKIP. Interacts with CDC40/PRP17; this interaction leads to CDC40 isomerization. Interacts with RBM22.</text>
</comment>
<comment type="subcellular location">
    <subcellularLocation>
        <location evidence="2">Nucleus</location>
    </subcellularLocation>
</comment>
<comment type="developmental stage">
    <text evidence="4">Widely expressed in the developing cortex at 14.5 dpc.</text>
</comment>
<comment type="disruption phenotype">
    <text evidence="4">Mutant mice, in which PPIL1 is truncated at position 102, die before 12.5 dpc.</text>
</comment>
<comment type="similarity">
    <text evidence="5">Belongs to the cyclophilin-type PPIase family. PPIL1 subfamily.</text>
</comment>
<feature type="chain" id="PRO_0000064165" description="Peptidyl-prolyl cis-trans isomerase-like 1">
    <location>
        <begin position="1"/>
        <end position="166"/>
    </location>
</feature>
<feature type="domain" description="PPIase cyclophilin-type" evidence="3">
    <location>
        <begin position="10"/>
        <end position="164"/>
    </location>
</feature>
<feature type="binding site" evidence="1">
    <location>
        <begin position="54"/>
        <end position="65"/>
    </location>
    <ligand>
        <name>cyclosporin A</name>
        <dbReference type="ChEBI" id="CHEBI:4031"/>
    </ligand>
</feature>
<feature type="binding site" evidence="1">
    <location>
        <begin position="70"/>
        <end position="71"/>
    </location>
    <ligand>
        <name>cyclosporin A</name>
        <dbReference type="ChEBI" id="CHEBI:4031"/>
    </ligand>
</feature>
<feature type="binding site" evidence="1">
    <location>
        <begin position="99"/>
        <end position="104"/>
    </location>
    <ligand>
        <name>cyclosporin A</name>
        <dbReference type="ChEBI" id="CHEBI:4031"/>
    </ligand>
</feature>
<feature type="binding site" evidence="1">
    <location>
        <begin position="109"/>
        <end position="113"/>
    </location>
    <ligand>
        <name>cyclosporin A</name>
        <dbReference type="ChEBI" id="CHEBI:4031"/>
    </ligand>
</feature>
<feature type="binding site" evidence="1">
    <location>
        <position position="119"/>
    </location>
    <ligand>
        <name>cyclosporin A</name>
        <dbReference type="ChEBI" id="CHEBI:4031"/>
    </ligand>
</feature>
<feature type="binding site" evidence="1">
    <location>
        <position position="125"/>
    </location>
    <ligand>
        <name>cyclosporin A</name>
        <dbReference type="ChEBI" id="CHEBI:4031"/>
    </ligand>
</feature>
<feature type="modified residue" description="Phosphoserine" evidence="2">
    <location>
        <position position="149"/>
    </location>
</feature>
<feature type="mutagenesis site" description="Loss of isomerase activity. No phenotype when introduced in mice, animals are viable and fertile with no microcephaly or defective cortical lamination; no splicing defect." evidence="4">
    <original>R</original>
    <variation>A</variation>
    <location>
        <position position="55"/>
    </location>
</feature>
<organism>
    <name type="scientific">Mus musculus</name>
    <name type="common">Mouse</name>
    <dbReference type="NCBI Taxonomy" id="10090"/>
    <lineage>
        <taxon>Eukaryota</taxon>
        <taxon>Metazoa</taxon>
        <taxon>Chordata</taxon>
        <taxon>Craniata</taxon>
        <taxon>Vertebrata</taxon>
        <taxon>Euteleostomi</taxon>
        <taxon>Mammalia</taxon>
        <taxon>Eutheria</taxon>
        <taxon>Euarchontoglires</taxon>
        <taxon>Glires</taxon>
        <taxon>Rodentia</taxon>
        <taxon>Myomorpha</taxon>
        <taxon>Muroidea</taxon>
        <taxon>Muridae</taxon>
        <taxon>Murinae</taxon>
        <taxon>Mus</taxon>
        <taxon>Mus</taxon>
    </lineage>
</organism>